<sequence length="246" mass="27424">MAGYLKLVCVSFQRQGFHTVGSRCKNRTGAEHLWLTRHLRDPFVKAAKVESYRCRSAFKLLEVNERHQILRPGLRVLDCGAAPGAWSQVAVQKVNAAGTDPSSPVGFVLGVDLLHIFPLEGATFLCPADVTDPRTSQRILEVLPGRRADVILSDMAPNATGFRDLDHDRLISLCLTLLSVTPDILQPGGTFLCKTWAGSQSRRLQRRLTEEFQNVRIIKPEASRKESSEVYFLATQYHGRKGTVKQ</sequence>
<protein>
    <recommendedName>
        <fullName evidence="11">rRNA methyltransferase 2, mitochondrial</fullName>
        <ecNumber evidence="15 16">2.1.1.-</ecNumber>
    </recommendedName>
    <alternativeName>
        <fullName evidence="12">16S rRNA (uridine(1369)-2'-O)-methyltransferase</fullName>
    </alternativeName>
    <alternativeName>
        <fullName evidence="12">16S rRNA [Um1369] 2'-O-methyltransferase</fullName>
    </alternativeName>
    <alternativeName>
        <fullName evidence="10">Protein ftsJ homolog 2</fullName>
    </alternativeName>
</protein>
<gene>
    <name evidence="11" type="primary">MRM2</name>
    <name evidence="13" type="synonym">FJH1</name>
    <name evidence="10" type="synonym">FTSJ2</name>
</gene>
<organism>
    <name type="scientific">Homo sapiens</name>
    <name type="common">Human</name>
    <dbReference type="NCBI Taxonomy" id="9606"/>
    <lineage>
        <taxon>Eukaryota</taxon>
        <taxon>Metazoa</taxon>
        <taxon>Chordata</taxon>
        <taxon>Craniata</taxon>
        <taxon>Vertebrata</taxon>
        <taxon>Euteleostomi</taxon>
        <taxon>Mammalia</taxon>
        <taxon>Eutheria</taxon>
        <taxon>Euarchontoglires</taxon>
        <taxon>Primates</taxon>
        <taxon>Haplorrhini</taxon>
        <taxon>Catarrhini</taxon>
        <taxon>Hominidae</taxon>
        <taxon>Homo</taxon>
    </lineage>
</organism>
<accession>Q9UI43</accession>
<accession>Q24JR8</accession>
<keyword id="KW-0002">3D-structure</keyword>
<keyword id="KW-0225">Disease variant</keyword>
<keyword id="KW-0489">Methyltransferase</keyword>
<keyword id="KW-0496">Mitochondrion</keyword>
<keyword id="KW-1274">Primary mitochondrial disease</keyword>
<keyword id="KW-1267">Proteomics identification</keyword>
<keyword id="KW-1185">Reference proteome</keyword>
<keyword id="KW-0698">rRNA processing</keyword>
<keyword id="KW-0949">S-adenosyl-L-methionine</keyword>
<keyword id="KW-0808">Transferase</keyword>
<keyword id="KW-0809">Transit peptide</keyword>
<dbReference type="EC" id="2.1.1.-" evidence="15 16"/>
<dbReference type="EMBL" id="AF093415">
    <property type="protein sequence ID" value="AAF22488.1"/>
    <property type="molecule type" value="mRNA"/>
</dbReference>
<dbReference type="EMBL" id="BC114514">
    <property type="protein sequence ID" value="AAI14515.1"/>
    <property type="molecule type" value="mRNA"/>
</dbReference>
<dbReference type="CCDS" id="CCDS5328.1"/>
<dbReference type="RefSeq" id="NP_037525.1">
    <property type="nucleotide sequence ID" value="NM_013393.3"/>
</dbReference>
<dbReference type="PDB" id="2NYU">
    <property type="method" value="X-ray"/>
    <property type="resolution" value="1.76 A"/>
    <property type="chains" value="A/B=51-246"/>
</dbReference>
<dbReference type="PDB" id="7O9K">
    <property type="method" value="EM"/>
    <property type="resolution" value="3.10 A"/>
    <property type="chains" value="n=1-246"/>
</dbReference>
<dbReference type="PDB" id="7O9M">
    <property type="method" value="EM"/>
    <property type="resolution" value="2.50 A"/>
    <property type="chains" value="n=1-246"/>
</dbReference>
<dbReference type="PDB" id="7ODS">
    <property type="method" value="EM"/>
    <property type="resolution" value="3.10 A"/>
    <property type="chains" value="z=1-246"/>
</dbReference>
<dbReference type="PDBsum" id="2NYU"/>
<dbReference type="PDBsum" id="7O9K"/>
<dbReference type="PDBsum" id="7O9M"/>
<dbReference type="PDBsum" id="7ODS"/>
<dbReference type="EMDB" id="EMD-12763"/>
<dbReference type="EMDB" id="EMD-12764"/>
<dbReference type="EMDB" id="EMD-12846"/>
<dbReference type="SMR" id="Q9UI43"/>
<dbReference type="BioGRID" id="118996">
    <property type="interactions" value="92"/>
</dbReference>
<dbReference type="FunCoup" id="Q9UI43">
    <property type="interactions" value="2364"/>
</dbReference>
<dbReference type="IntAct" id="Q9UI43">
    <property type="interactions" value="79"/>
</dbReference>
<dbReference type="MINT" id="Q9UI43"/>
<dbReference type="STRING" id="9606.ENSP00000242257"/>
<dbReference type="DrugBank" id="DB12615">
    <property type="generic name" value="Plazomicin"/>
</dbReference>
<dbReference type="iPTMnet" id="Q9UI43"/>
<dbReference type="PhosphoSitePlus" id="Q9UI43"/>
<dbReference type="BioMuta" id="MRM2"/>
<dbReference type="DMDM" id="9910866"/>
<dbReference type="jPOST" id="Q9UI43"/>
<dbReference type="MassIVE" id="Q9UI43"/>
<dbReference type="PaxDb" id="9606-ENSP00000242257"/>
<dbReference type="PeptideAtlas" id="Q9UI43"/>
<dbReference type="ProteomicsDB" id="84473"/>
<dbReference type="Pumba" id="Q9UI43"/>
<dbReference type="Antibodypedia" id="24314">
    <property type="antibodies" value="59 antibodies from 15 providers"/>
</dbReference>
<dbReference type="DNASU" id="29960"/>
<dbReference type="Ensembl" id="ENST00000242257.14">
    <property type="protein sequence ID" value="ENSP00000242257.8"/>
    <property type="gene ID" value="ENSG00000122687.19"/>
</dbReference>
<dbReference type="Ensembl" id="ENST00000440306.3">
    <property type="protein sequence ID" value="ENSP00000392343.3"/>
    <property type="gene ID" value="ENSG00000122687.19"/>
</dbReference>
<dbReference type="GeneID" id="29960"/>
<dbReference type="KEGG" id="hsa:29960"/>
<dbReference type="MANE-Select" id="ENST00000242257.14">
    <property type="protein sequence ID" value="ENSP00000242257.8"/>
    <property type="RefSeq nucleotide sequence ID" value="NM_013393.3"/>
    <property type="RefSeq protein sequence ID" value="NP_037525.1"/>
</dbReference>
<dbReference type="AGR" id="HGNC:16352"/>
<dbReference type="CTD" id="29960"/>
<dbReference type="DisGeNET" id="29960"/>
<dbReference type="GeneCards" id="MRM2"/>
<dbReference type="HGNC" id="HGNC:16352">
    <property type="gene designation" value="MRM2"/>
</dbReference>
<dbReference type="HPA" id="ENSG00000122687">
    <property type="expression patterns" value="Low tissue specificity"/>
</dbReference>
<dbReference type="MalaCards" id="MRM2"/>
<dbReference type="MIM" id="606906">
    <property type="type" value="gene"/>
</dbReference>
<dbReference type="MIM" id="618567">
    <property type="type" value="phenotype"/>
</dbReference>
<dbReference type="neXtProt" id="NX_Q9UI43"/>
<dbReference type="OpenTargets" id="ENSG00000122687"/>
<dbReference type="PharmGKB" id="PA28418"/>
<dbReference type="VEuPathDB" id="HostDB:ENSG00000122687"/>
<dbReference type="eggNOG" id="KOG4589">
    <property type="taxonomic scope" value="Eukaryota"/>
</dbReference>
<dbReference type="GeneTree" id="ENSGT00730000111241"/>
<dbReference type="HOGENOM" id="CLU_009422_4_2_1"/>
<dbReference type="InParanoid" id="Q9UI43"/>
<dbReference type="OMA" id="HRQTDHL"/>
<dbReference type="OrthoDB" id="20105at2759"/>
<dbReference type="PAN-GO" id="Q9UI43">
    <property type="GO annotations" value="3 GO annotations based on evolutionary models"/>
</dbReference>
<dbReference type="PhylomeDB" id="Q9UI43"/>
<dbReference type="TreeFam" id="TF316701"/>
<dbReference type="BRENDA" id="2.1.1.166">
    <property type="organism ID" value="2681"/>
</dbReference>
<dbReference type="BRENDA" id="2.1.1.B123">
    <property type="organism ID" value="2681"/>
</dbReference>
<dbReference type="PathwayCommons" id="Q9UI43"/>
<dbReference type="Reactome" id="R-HSA-6793080">
    <property type="pathway name" value="rRNA modification in the mitochondrion"/>
</dbReference>
<dbReference type="SignaLink" id="Q9UI43"/>
<dbReference type="BioGRID-ORCS" id="29960">
    <property type="hits" value="209 hits in 1159 CRISPR screens"/>
</dbReference>
<dbReference type="CD-CODE" id="5965E019">
    <property type="entry name" value="mtRNA granule"/>
</dbReference>
<dbReference type="ChiTaRS" id="MRM2">
    <property type="organism name" value="human"/>
</dbReference>
<dbReference type="EvolutionaryTrace" id="Q9UI43"/>
<dbReference type="GenomeRNAi" id="29960"/>
<dbReference type="Pharos" id="Q9UI43">
    <property type="development level" value="Tbio"/>
</dbReference>
<dbReference type="PRO" id="PR:Q9UI43"/>
<dbReference type="Proteomes" id="UP000005640">
    <property type="component" value="Chromosome 7"/>
</dbReference>
<dbReference type="RNAct" id="Q9UI43">
    <property type="molecule type" value="protein"/>
</dbReference>
<dbReference type="Bgee" id="ENSG00000122687">
    <property type="expression patterns" value="Expressed in primordial germ cell in gonad and 103 other cell types or tissues"/>
</dbReference>
<dbReference type="ExpressionAtlas" id="Q9UI43">
    <property type="expression patterns" value="baseline and differential"/>
</dbReference>
<dbReference type="GO" id="GO:0005759">
    <property type="term" value="C:mitochondrial matrix"/>
    <property type="evidence" value="ECO:0000315"/>
    <property type="project" value="FlyBase"/>
</dbReference>
<dbReference type="GO" id="GO:0005739">
    <property type="term" value="C:mitochondrion"/>
    <property type="evidence" value="ECO:0006056"/>
    <property type="project" value="FlyBase"/>
</dbReference>
<dbReference type="GO" id="GO:0005730">
    <property type="term" value="C:nucleolus"/>
    <property type="evidence" value="ECO:0000314"/>
    <property type="project" value="UniProtKB"/>
</dbReference>
<dbReference type="GO" id="GO:0008650">
    <property type="term" value="F:rRNA (uridine-2'-O-)-methyltransferase activity"/>
    <property type="evidence" value="ECO:0000315"/>
    <property type="project" value="FlyBase"/>
</dbReference>
<dbReference type="GO" id="GO:1902775">
    <property type="term" value="P:mitochondrial large ribosomal subunit assembly"/>
    <property type="evidence" value="ECO:0000315"/>
    <property type="project" value="FlyBase"/>
</dbReference>
<dbReference type="GO" id="GO:0001510">
    <property type="term" value="P:RNA methylation"/>
    <property type="evidence" value="ECO:0000318"/>
    <property type="project" value="GO_Central"/>
</dbReference>
<dbReference type="GO" id="GO:0000451">
    <property type="term" value="P:rRNA 2'-O-methylation"/>
    <property type="evidence" value="ECO:0000304"/>
    <property type="project" value="Reactome"/>
</dbReference>
<dbReference type="GO" id="GO:0031167">
    <property type="term" value="P:rRNA methylation"/>
    <property type="evidence" value="ECO:0000303"/>
    <property type="project" value="BHF-UCL"/>
</dbReference>
<dbReference type="GO" id="GO:0006364">
    <property type="term" value="P:rRNA processing"/>
    <property type="evidence" value="ECO:0000315"/>
    <property type="project" value="FlyBase"/>
</dbReference>
<dbReference type="CDD" id="cd02440">
    <property type="entry name" value="AdoMet_MTases"/>
    <property type="match status" value="1"/>
</dbReference>
<dbReference type="FunFam" id="3.40.50.150:FF:000129">
    <property type="entry name" value="Mitochondrial rRNA methyltransferase 2"/>
    <property type="match status" value="1"/>
</dbReference>
<dbReference type="Gene3D" id="3.40.50.150">
    <property type="entry name" value="Vaccinia Virus protein VP39"/>
    <property type="match status" value="1"/>
</dbReference>
<dbReference type="HAMAP" id="MF_01547">
    <property type="entry name" value="RNA_methyltr_E"/>
    <property type="match status" value="1"/>
</dbReference>
<dbReference type="InterPro" id="IPR050082">
    <property type="entry name" value="RNA_methyltr_RlmE"/>
</dbReference>
<dbReference type="InterPro" id="IPR002877">
    <property type="entry name" value="RNA_MeTrfase_FtsJ_dom"/>
</dbReference>
<dbReference type="InterPro" id="IPR015507">
    <property type="entry name" value="rRNA-MeTfrase_E"/>
</dbReference>
<dbReference type="InterPro" id="IPR029063">
    <property type="entry name" value="SAM-dependent_MTases_sf"/>
</dbReference>
<dbReference type="PANTHER" id="PTHR10920">
    <property type="entry name" value="RIBOSOMAL RNA METHYLTRANSFERASE"/>
    <property type="match status" value="1"/>
</dbReference>
<dbReference type="PANTHER" id="PTHR10920:SF18">
    <property type="entry name" value="RRNA METHYLTRANSFERASE 2, MITOCHONDRIAL"/>
    <property type="match status" value="1"/>
</dbReference>
<dbReference type="Pfam" id="PF01728">
    <property type="entry name" value="FtsJ"/>
    <property type="match status" value="1"/>
</dbReference>
<dbReference type="PIRSF" id="PIRSF005461">
    <property type="entry name" value="23S_rRNA_mtase"/>
    <property type="match status" value="1"/>
</dbReference>
<dbReference type="SUPFAM" id="SSF53335">
    <property type="entry name" value="S-adenosyl-L-methionine-dependent methyltransferases"/>
    <property type="match status" value="1"/>
</dbReference>
<comment type="function">
    <text evidence="5 6 8">S-adenosyl-L-methionine-dependent 2'-O-ribose methyltransferase that catalyzes the formation of 2'-O-methyluridine at position 1369 (Um1369) in the 16S mitochondrial large subunit ribosomal RNA (mtLSU rRNA), a universally conserved modification in the peptidyl transferase domain of the mtLSU rRNA (PubMed:25009282, PubMed:25074936, PubMed:35177605). This activity may require prior 2'-O-methylguanosine modification at position 1370 (Gm1370) by MRM3 (PubMed:35177605). Essential for late-stage assembly of mtLSU required for efficient translation of mitochondrial DNA encoded proteins; methyltransferase activity is not required for this function (PubMed:35177605). Essential for mitochondrial respiratory function (PubMed:35177605).</text>
</comment>
<comment type="catalytic activity">
    <reaction evidence="15 16">
        <text>uridine(1369) in 16S rRNA + S-adenosyl-L-methionine = 2'-O-methyluridine(1369) in 16S rRNA + S-adenosyl-L-homocysteine + H(+)</text>
        <dbReference type="Rhea" id="RHEA:47764"/>
        <dbReference type="Rhea" id="RHEA-COMP:11903"/>
        <dbReference type="Rhea" id="RHEA-COMP:11904"/>
        <dbReference type="ChEBI" id="CHEBI:15378"/>
        <dbReference type="ChEBI" id="CHEBI:57856"/>
        <dbReference type="ChEBI" id="CHEBI:59789"/>
        <dbReference type="ChEBI" id="CHEBI:65315"/>
        <dbReference type="ChEBI" id="CHEBI:74478"/>
    </reaction>
</comment>
<comment type="subcellular location">
    <subcellularLocation>
        <location evidence="4 5">Mitochondrion</location>
    </subcellularLocation>
</comment>
<comment type="tissue specificity">
    <text evidence="3">Widely expressed, with highest expression in muscle, placenta, and heart.</text>
</comment>
<comment type="disease" evidence="7">
    <disease id="DI-05654">
        <name>Mitochondrial DNA depletion syndrome 17</name>
        <acronym>MTDPS17</acronym>
        <description>An autosomal recessive mitochondrial disorder characterized by childhood onset of rapidly progressive encephalopathy, stroke-like episodes, lactic acidosis, hypocitrullinemia, multiple defects of oxidative phosphorylation, mitochondrial complex I and IV deficiency, and reduced mtDNA copy number.</description>
        <dbReference type="MIM" id="618567"/>
    </disease>
    <text>The disease may be caused by variants affecting the gene represented in this entry.</text>
</comment>
<comment type="similarity">
    <text evidence="14">Belongs to the class I-like SAM-binding methyltransferase superfamily. RNA methyltransferase RlmE family.</text>
</comment>
<feature type="transit peptide" description="Mitochondrion" evidence="2">
    <location>
        <begin position="1"/>
        <end position="18"/>
    </location>
</feature>
<feature type="chain" id="PRO_0000155576" description="rRNA methyltransferase 2, mitochondrial">
    <location>
        <begin position="19"/>
        <end position="246"/>
    </location>
</feature>
<feature type="active site" description="Proton acceptor" evidence="1">
    <location>
        <position position="194"/>
    </location>
</feature>
<feature type="binding site" evidence="9">
    <location>
        <begin position="83"/>
        <end position="86"/>
    </location>
    <ligand>
        <name>S-adenosyl-L-methionine</name>
        <dbReference type="ChEBI" id="CHEBI:59789"/>
    </ligand>
</feature>
<feature type="binding site" evidence="9">
    <location>
        <position position="112"/>
    </location>
    <ligand>
        <name>S-adenosyl-L-methionine</name>
        <dbReference type="ChEBI" id="CHEBI:59789"/>
    </ligand>
</feature>
<feature type="binding site" evidence="9">
    <location>
        <begin position="129"/>
        <end position="130"/>
    </location>
    <ligand>
        <name>S-adenosyl-L-methionine</name>
        <dbReference type="ChEBI" id="CHEBI:59789"/>
    </ligand>
</feature>
<feature type="binding site" evidence="9">
    <location>
        <position position="154"/>
    </location>
    <ligand>
        <name>S-adenosyl-L-methionine</name>
        <dbReference type="ChEBI" id="CHEBI:59789"/>
    </ligand>
</feature>
<feature type="sequence variant" id="VAR_083280" description="In MTDPS17." evidence="7">
    <original>G</original>
    <variation>R</variation>
    <location>
        <position position="189"/>
    </location>
</feature>
<feature type="mutagenesis site" description="Loss of methyltransferase activity. Does not modify mtLSU rRNA (Um1369) but still functions as an mtLSU assembly factor." evidence="8">
    <original>K</original>
    <variation>A</variation>
    <location>
        <position position="59"/>
    </location>
</feature>
<feature type="mutagenesis site" description="Loss of methyltransferase activity. Does not modify mtLSU rRNA (Um1369) but still functions as an mtLSU assembly factor." evidence="8">
    <original>D</original>
    <variation>A</variation>
    <location>
        <position position="154"/>
    </location>
</feature>
<feature type="sequence conflict" description="In Ref. 2; AAI14515." evidence="14" ref="2">
    <original>G</original>
    <variation>S</variation>
    <location>
        <position position="73"/>
    </location>
</feature>
<feature type="helix" evidence="17">
    <location>
        <begin position="56"/>
        <end position="67"/>
    </location>
</feature>
<feature type="strand" evidence="17">
    <location>
        <begin position="75"/>
        <end position="79"/>
    </location>
</feature>
<feature type="helix" evidence="17">
    <location>
        <begin position="85"/>
        <end position="93"/>
    </location>
</feature>
<feature type="turn" evidence="17">
    <location>
        <begin position="94"/>
        <end position="97"/>
    </location>
</feature>
<feature type="strand" evidence="17">
    <location>
        <begin position="107"/>
        <end position="111"/>
    </location>
</feature>
<feature type="strand" evidence="17">
    <location>
        <begin position="123"/>
        <end position="125"/>
    </location>
</feature>
<feature type="helix" evidence="17">
    <location>
        <begin position="133"/>
        <end position="142"/>
    </location>
</feature>
<feature type="helix" evidence="17">
    <location>
        <begin position="144"/>
        <end position="146"/>
    </location>
</feature>
<feature type="strand" evidence="17">
    <location>
        <begin position="148"/>
        <end position="153"/>
    </location>
</feature>
<feature type="helix" evidence="17">
    <location>
        <begin position="163"/>
        <end position="184"/>
    </location>
</feature>
<feature type="strand" evidence="17">
    <location>
        <begin position="185"/>
        <end position="195"/>
    </location>
</feature>
<feature type="helix" evidence="17">
    <location>
        <begin position="199"/>
        <end position="201"/>
    </location>
</feature>
<feature type="helix" evidence="17">
    <location>
        <begin position="202"/>
        <end position="211"/>
    </location>
</feature>
<feature type="strand" evidence="17">
    <location>
        <begin position="212"/>
        <end position="218"/>
    </location>
</feature>
<feature type="strand" evidence="17">
    <location>
        <begin position="230"/>
        <end position="237"/>
    </location>
</feature>
<reference key="1">
    <citation type="submission" date="1998-09" db="EMBL/GenBank/DDBJ databases">
        <title>Chromosomal localization of human FJH1.</title>
        <authorList>
            <person name="Jin D.-Y."/>
            <person name="Jeang K.-T."/>
        </authorList>
    </citation>
    <scope>NUCLEOTIDE SEQUENCE [MRNA]</scope>
</reference>
<reference key="2">
    <citation type="journal article" date="2004" name="Genome Res.">
        <title>The status, quality, and expansion of the NIH full-length cDNA project: the Mammalian Gene Collection (MGC).</title>
        <authorList>
            <consortium name="The MGC Project Team"/>
        </authorList>
    </citation>
    <scope>NUCLEOTIDE SEQUENCE [LARGE SCALE MRNA]</scope>
</reference>
<reference key="3">
    <citation type="journal article" date="2002" name="Genomics">
        <title>Identification and characterization of FTSJ2, a novel human nucleolar protein homologous to bacterial ribosomal RNA methyltransferase.</title>
        <authorList>
            <person name="Ching Y.-P."/>
            <person name="Zhou H.-J."/>
            <person name="Yuan J.-G."/>
            <person name="Qiang B.-Q."/>
            <person name="Kung H."/>
            <person name="Jin D.-Y."/>
        </authorList>
    </citation>
    <scope>TISSUE SPECIFICITY</scope>
</reference>
<reference key="4">
    <citation type="journal article" date="2011" name="BMC Syst. Biol.">
        <title>Initial characterization of the human central proteome.</title>
        <authorList>
            <person name="Burkard T.R."/>
            <person name="Planyavsky M."/>
            <person name="Kaupe I."/>
            <person name="Breitwieser F.P."/>
            <person name="Buerckstuemmer T."/>
            <person name="Bennett K.L."/>
            <person name="Superti-Furga G."/>
            <person name="Colinge J."/>
        </authorList>
    </citation>
    <scope>IDENTIFICATION BY MASS SPECTROMETRY [LARGE SCALE ANALYSIS]</scope>
</reference>
<reference key="5">
    <citation type="journal article" date="2013" name="J. Biol. Chem.">
        <title>Mitochondrial ribosomal RNA (rRNA) methyltransferase family members are positioned to modify nascent rRNA in foci near the mitochondrial DNA nucleoid.</title>
        <authorList>
            <person name="Lee K.W."/>
            <person name="Okot-Kotber C."/>
            <person name="LaComb J.F."/>
            <person name="Bogenhagen D.F."/>
        </authorList>
    </citation>
    <scope>SUBCELLULAR LOCATION</scope>
</reference>
<reference key="6">
    <citation type="journal article" date="2014" name="J. Biol. Chem.">
        <title>Assignment of 2'-O-methyltransferases to modification sites on the mammalian mitochondrial large subunit 16S rRNA.</title>
        <authorList>
            <person name="Lee K.W."/>
            <person name="Bogenhagen D.F."/>
        </authorList>
    </citation>
    <scope>FUNCTION</scope>
</reference>
<reference key="7">
    <citation type="journal article" date="2014" name="Mol. Biol. Cell">
        <title>MRM2 and MRM3 are involved in biogenesis of the large subunit of the mitochondrial ribosome.</title>
        <authorList>
            <person name="Rorbach J."/>
            <person name="Boesch P."/>
            <person name="Gammage P.A."/>
            <person name="Nicholls T.J."/>
            <person name="Pearce S.F."/>
            <person name="Patel D."/>
            <person name="Hauser A."/>
            <person name="Perocchi F."/>
            <person name="Minczuk M."/>
        </authorList>
    </citation>
    <scope>FUNCTION</scope>
    <scope>SUBCELLULAR LOCATION</scope>
</reference>
<reference key="8">
    <citation type="submission" date="2009-02" db="PDB data bank">
        <title>The crystal structure of human ftsJ homolog 2 (E.coli) protein in complex with AdoMet.</title>
        <authorList>
            <consortium name="Structural genomics consortium (SGC)"/>
        </authorList>
    </citation>
    <scope>X-RAY CRYSTALLOGRAPHY (1.76 ANGSTROMS) OF 51-246 IN COMPLEX WITH S-ADENOSYL-L-METHIONINE</scope>
</reference>
<reference key="9">
    <citation type="journal article" date="2022" name="Nat. Commun.">
        <title>A late-stage assembly checkpoint of the human mitochondrial ribosome large subunit.</title>
        <authorList>
            <person name="Rebelo-Guiomar P."/>
            <person name="Pellegrino S."/>
            <person name="Dent K.C."/>
            <person name="Sas-Chen A."/>
            <person name="Miller-Fleming L."/>
            <person name="Garone C."/>
            <person name="Van Haute L."/>
            <person name="Rogan J.F."/>
            <person name="Dinan A."/>
            <person name="Firth A.E."/>
            <person name="Andrews B."/>
            <person name="Whitworth A.J."/>
            <person name="Schwartz S."/>
            <person name="Warren A.J."/>
            <person name="Minczuk M."/>
        </authorList>
    </citation>
    <scope>FUNCTION</scope>
    <scope>CATALYTIC ACTIVITY</scope>
    <scope>MUTAGENESIS OF LYS-59 AND ASP-154</scope>
</reference>
<reference key="10">
    <citation type="journal article" date="2017" name="Hum. Mol. Genet.">
        <title>Defective mitochondrial rRNA methyltransferase MRM2 causes MELAS-like clinical syndrome.</title>
        <authorList>
            <person name="Garone C."/>
            <person name="D'Souza A.R."/>
            <person name="Dallabona C."/>
            <person name="Lodi T."/>
            <person name="Rebelo-Guiomar P."/>
            <person name="Rorbach J."/>
            <person name="Donati M.A."/>
            <person name="Procopio E."/>
            <person name="Montomoli M."/>
            <person name="Guerrini R."/>
            <person name="Zeviani M."/>
            <person name="Calvo S.E."/>
            <person name="Mootha V.K."/>
            <person name="DiMauro S."/>
            <person name="Ferrero I."/>
            <person name="Minczuk M."/>
        </authorList>
    </citation>
    <scope>VARIANT MTDPS17 ARG-189</scope>
    <scope>INVOLVEMENT IN MTDPS17</scope>
</reference>
<evidence type="ECO:0000250" key="1">
    <source>
        <dbReference type="UniProtKB" id="P0C0R7"/>
    </source>
</evidence>
<evidence type="ECO:0000255" key="2"/>
<evidence type="ECO:0000269" key="3">
    <source>
    </source>
</evidence>
<evidence type="ECO:0000269" key="4">
    <source>
    </source>
</evidence>
<evidence type="ECO:0000269" key="5">
    <source>
    </source>
</evidence>
<evidence type="ECO:0000269" key="6">
    <source>
    </source>
</evidence>
<evidence type="ECO:0000269" key="7">
    <source>
    </source>
</evidence>
<evidence type="ECO:0000269" key="8">
    <source>
    </source>
</evidence>
<evidence type="ECO:0000269" key="9">
    <source ref="8"/>
</evidence>
<evidence type="ECO:0000303" key="10">
    <source>
    </source>
</evidence>
<evidence type="ECO:0000303" key="11">
    <source>
    </source>
</evidence>
<evidence type="ECO:0000303" key="12">
    <source>
    </source>
</evidence>
<evidence type="ECO:0000303" key="13">
    <source ref="1"/>
</evidence>
<evidence type="ECO:0000305" key="14"/>
<evidence type="ECO:0000305" key="15">
    <source>
    </source>
</evidence>
<evidence type="ECO:0000305" key="16">
    <source>
    </source>
</evidence>
<evidence type="ECO:0007829" key="17">
    <source>
        <dbReference type="PDB" id="2NYU"/>
    </source>
</evidence>
<proteinExistence type="evidence at protein level"/>
<name>MRM2_HUMAN</name>